<keyword id="KW-1185">Reference proteome</keyword>
<keyword id="KW-0694">RNA-binding</keyword>
<keyword id="KW-0804">Transcription</keyword>
<keyword id="KW-0889">Transcription antitermination</keyword>
<keyword id="KW-0805">Transcription regulation</keyword>
<gene>
    <name evidence="1" type="primary">nusB</name>
    <name type="ordered locus">Dtpsy_2258</name>
</gene>
<feature type="chain" id="PRO_1000192435" description="Transcription antitermination protein NusB">
    <location>
        <begin position="1"/>
        <end position="177"/>
    </location>
</feature>
<feature type="region of interest" description="Disordered" evidence="2">
    <location>
        <begin position="1"/>
        <end position="35"/>
    </location>
</feature>
<feature type="compositionally biased region" description="Low complexity" evidence="2">
    <location>
        <begin position="17"/>
        <end position="28"/>
    </location>
</feature>
<reference key="1">
    <citation type="submission" date="2009-01" db="EMBL/GenBank/DDBJ databases">
        <title>Complete sequence of Diaphorobacter sp. TPSY.</title>
        <authorList>
            <consortium name="US DOE Joint Genome Institute"/>
            <person name="Lucas S."/>
            <person name="Copeland A."/>
            <person name="Lapidus A."/>
            <person name="Glavina del Rio T."/>
            <person name="Tice H."/>
            <person name="Bruce D."/>
            <person name="Goodwin L."/>
            <person name="Pitluck S."/>
            <person name="Chertkov O."/>
            <person name="Brettin T."/>
            <person name="Detter J.C."/>
            <person name="Han C."/>
            <person name="Larimer F."/>
            <person name="Land M."/>
            <person name="Hauser L."/>
            <person name="Kyrpides N."/>
            <person name="Mikhailova N."/>
            <person name="Coates J.D."/>
        </authorList>
    </citation>
    <scope>NUCLEOTIDE SEQUENCE [LARGE SCALE GENOMIC DNA]</scope>
    <source>
        <strain>TPSY</strain>
    </source>
</reference>
<sequence>MTDSANPTPSARPPRQPRTGTTGTGARKAGSKSGRSRAREFALQALYQHLVGGNDATAIDVFTRDLSGFHKADAAHYDALLHGCITTAQYMDELIAPQLDRKMSEISPIEHAVMWIGVYEFQHCQDVPWRVVINECIELAKEFGGTDGHKYVNGVLNGLAPQLRATEVAADKAAARG</sequence>
<evidence type="ECO:0000255" key="1">
    <source>
        <dbReference type="HAMAP-Rule" id="MF_00073"/>
    </source>
</evidence>
<evidence type="ECO:0000256" key="2">
    <source>
        <dbReference type="SAM" id="MobiDB-lite"/>
    </source>
</evidence>
<protein>
    <recommendedName>
        <fullName evidence="1">Transcription antitermination protein NusB</fullName>
    </recommendedName>
    <alternativeName>
        <fullName evidence="1">Antitermination factor NusB</fullName>
    </alternativeName>
</protein>
<organism>
    <name type="scientific">Acidovorax ebreus (strain TPSY)</name>
    <name type="common">Diaphorobacter sp. (strain TPSY)</name>
    <dbReference type="NCBI Taxonomy" id="535289"/>
    <lineage>
        <taxon>Bacteria</taxon>
        <taxon>Pseudomonadati</taxon>
        <taxon>Pseudomonadota</taxon>
        <taxon>Betaproteobacteria</taxon>
        <taxon>Burkholderiales</taxon>
        <taxon>Comamonadaceae</taxon>
        <taxon>Diaphorobacter</taxon>
    </lineage>
</organism>
<name>NUSB_ACIET</name>
<proteinExistence type="inferred from homology"/>
<accession>B9MBL7</accession>
<dbReference type="EMBL" id="CP001392">
    <property type="protein sequence ID" value="ACM33696.1"/>
    <property type="molecule type" value="Genomic_DNA"/>
</dbReference>
<dbReference type="RefSeq" id="WP_015913682.1">
    <property type="nucleotide sequence ID" value="NC_011992.1"/>
</dbReference>
<dbReference type="SMR" id="B9MBL7"/>
<dbReference type="KEGG" id="dia:Dtpsy_2258"/>
<dbReference type="eggNOG" id="COG0781">
    <property type="taxonomic scope" value="Bacteria"/>
</dbReference>
<dbReference type="HOGENOM" id="CLU_087843_4_1_4"/>
<dbReference type="Proteomes" id="UP000000450">
    <property type="component" value="Chromosome"/>
</dbReference>
<dbReference type="GO" id="GO:0005829">
    <property type="term" value="C:cytosol"/>
    <property type="evidence" value="ECO:0007669"/>
    <property type="project" value="TreeGrafter"/>
</dbReference>
<dbReference type="GO" id="GO:0003723">
    <property type="term" value="F:RNA binding"/>
    <property type="evidence" value="ECO:0007669"/>
    <property type="project" value="UniProtKB-UniRule"/>
</dbReference>
<dbReference type="GO" id="GO:0006353">
    <property type="term" value="P:DNA-templated transcription termination"/>
    <property type="evidence" value="ECO:0007669"/>
    <property type="project" value="UniProtKB-UniRule"/>
</dbReference>
<dbReference type="GO" id="GO:0031564">
    <property type="term" value="P:transcription antitermination"/>
    <property type="evidence" value="ECO:0007669"/>
    <property type="project" value="UniProtKB-KW"/>
</dbReference>
<dbReference type="Gene3D" id="1.10.940.10">
    <property type="entry name" value="NusB-like"/>
    <property type="match status" value="1"/>
</dbReference>
<dbReference type="HAMAP" id="MF_00073">
    <property type="entry name" value="NusB"/>
    <property type="match status" value="1"/>
</dbReference>
<dbReference type="InterPro" id="IPR035926">
    <property type="entry name" value="NusB-like_sf"/>
</dbReference>
<dbReference type="InterPro" id="IPR011605">
    <property type="entry name" value="NusB_fam"/>
</dbReference>
<dbReference type="InterPro" id="IPR006027">
    <property type="entry name" value="NusB_RsmB_TIM44"/>
</dbReference>
<dbReference type="NCBIfam" id="TIGR01951">
    <property type="entry name" value="nusB"/>
    <property type="match status" value="1"/>
</dbReference>
<dbReference type="PANTHER" id="PTHR11078:SF3">
    <property type="entry name" value="ANTITERMINATION NUSB DOMAIN-CONTAINING PROTEIN"/>
    <property type="match status" value="1"/>
</dbReference>
<dbReference type="PANTHER" id="PTHR11078">
    <property type="entry name" value="N UTILIZATION SUBSTANCE PROTEIN B-RELATED"/>
    <property type="match status" value="1"/>
</dbReference>
<dbReference type="Pfam" id="PF01029">
    <property type="entry name" value="NusB"/>
    <property type="match status" value="1"/>
</dbReference>
<dbReference type="SUPFAM" id="SSF48013">
    <property type="entry name" value="NusB-like"/>
    <property type="match status" value="1"/>
</dbReference>
<comment type="function">
    <text evidence="1">Involved in transcription antitermination. Required for transcription of ribosomal RNA (rRNA) genes. Binds specifically to the boxA antiterminator sequence of the ribosomal RNA (rrn) operons.</text>
</comment>
<comment type="similarity">
    <text evidence="1">Belongs to the NusB family.</text>
</comment>